<comment type="function">
    <text evidence="1">Peptidoglycan polymerase that catalyzes glycan chain elongation from lipid-linked precursors.</text>
</comment>
<comment type="catalytic activity">
    <reaction evidence="1">
        <text>[GlcNAc-(1-&gt;4)-Mur2Ac(oyl-L-Ala-gamma-D-Glu-L-Lys-D-Ala-D-Ala)](n)-di-trans,octa-cis-undecaprenyl diphosphate + beta-D-GlcNAc-(1-&gt;4)-Mur2Ac(oyl-L-Ala-gamma-D-Glu-L-Lys-D-Ala-D-Ala)-di-trans,octa-cis-undecaprenyl diphosphate = [GlcNAc-(1-&gt;4)-Mur2Ac(oyl-L-Ala-gamma-D-Glu-L-Lys-D-Ala-D-Ala)](n+1)-di-trans,octa-cis-undecaprenyl diphosphate + di-trans,octa-cis-undecaprenyl diphosphate + H(+)</text>
        <dbReference type="Rhea" id="RHEA:23708"/>
        <dbReference type="Rhea" id="RHEA-COMP:9602"/>
        <dbReference type="Rhea" id="RHEA-COMP:9603"/>
        <dbReference type="ChEBI" id="CHEBI:15378"/>
        <dbReference type="ChEBI" id="CHEBI:58405"/>
        <dbReference type="ChEBI" id="CHEBI:60033"/>
        <dbReference type="ChEBI" id="CHEBI:78435"/>
        <dbReference type="EC" id="2.4.99.28"/>
    </reaction>
</comment>
<comment type="pathway">
    <text evidence="1">Cell wall biogenesis; peptidoglycan biosynthesis.</text>
</comment>
<comment type="subcellular location">
    <subcellularLocation>
        <location evidence="1">Cell inner membrane</location>
        <topology evidence="1">Single-pass membrane protein</topology>
    </subcellularLocation>
</comment>
<comment type="similarity">
    <text evidence="1">Belongs to the glycosyltransferase 51 family.</text>
</comment>
<gene>
    <name evidence="1" type="primary">mtgA</name>
    <name type="ordered locus">SPC_3396</name>
</gene>
<evidence type="ECO:0000255" key="1">
    <source>
        <dbReference type="HAMAP-Rule" id="MF_00766"/>
    </source>
</evidence>
<dbReference type="EC" id="2.4.99.28" evidence="1"/>
<dbReference type="EMBL" id="CP000857">
    <property type="protein sequence ID" value="ACN47481.1"/>
    <property type="molecule type" value="Genomic_DNA"/>
</dbReference>
<dbReference type="RefSeq" id="WP_000044648.1">
    <property type="nucleotide sequence ID" value="NC_012125.1"/>
</dbReference>
<dbReference type="SMR" id="C0PZM1"/>
<dbReference type="CAZy" id="GT51">
    <property type="family name" value="Glycosyltransferase Family 51"/>
</dbReference>
<dbReference type="KEGG" id="sei:SPC_3396"/>
<dbReference type="HOGENOM" id="CLU_006354_1_1_6"/>
<dbReference type="UniPathway" id="UPA00219"/>
<dbReference type="Proteomes" id="UP000001599">
    <property type="component" value="Chromosome"/>
</dbReference>
<dbReference type="GO" id="GO:0009274">
    <property type="term" value="C:peptidoglycan-based cell wall"/>
    <property type="evidence" value="ECO:0007669"/>
    <property type="project" value="InterPro"/>
</dbReference>
<dbReference type="GO" id="GO:0005886">
    <property type="term" value="C:plasma membrane"/>
    <property type="evidence" value="ECO:0007669"/>
    <property type="project" value="UniProtKB-SubCell"/>
</dbReference>
<dbReference type="GO" id="GO:0016763">
    <property type="term" value="F:pentosyltransferase activity"/>
    <property type="evidence" value="ECO:0007669"/>
    <property type="project" value="InterPro"/>
</dbReference>
<dbReference type="GO" id="GO:0008955">
    <property type="term" value="F:peptidoglycan glycosyltransferase activity"/>
    <property type="evidence" value="ECO:0007669"/>
    <property type="project" value="UniProtKB-UniRule"/>
</dbReference>
<dbReference type="GO" id="GO:0071555">
    <property type="term" value="P:cell wall organization"/>
    <property type="evidence" value="ECO:0007669"/>
    <property type="project" value="UniProtKB-KW"/>
</dbReference>
<dbReference type="GO" id="GO:0009252">
    <property type="term" value="P:peptidoglycan biosynthetic process"/>
    <property type="evidence" value="ECO:0007669"/>
    <property type="project" value="UniProtKB-UniRule"/>
</dbReference>
<dbReference type="GO" id="GO:0008360">
    <property type="term" value="P:regulation of cell shape"/>
    <property type="evidence" value="ECO:0007669"/>
    <property type="project" value="UniProtKB-KW"/>
</dbReference>
<dbReference type="Gene3D" id="1.10.3810.10">
    <property type="entry name" value="Biosynthetic peptidoglycan transglycosylase-like"/>
    <property type="match status" value="1"/>
</dbReference>
<dbReference type="HAMAP" id="MF_00766">
    <property type="entry name" value="PGT_MtgA"/>
    <property type="match status" value="1"/>
</dbReference>
<dbReference type="InterPro" id="IPR001264">
    <property type="entry name" value="Glyco_trans_51"/>
</dbReference>
<dbReference type="InterPro" id="IPR023346">
    <property type="entry name" value="Lysozyme-like_dom_sf"/>
</dbReference>
<dbReference type="InterPro" id="IPR036950">
    <property type="entry name" value="PBP_transglycosylase"/>
</dbReference>
<dbReference type="InterPro" id="IPR011812">
    <property type="entry name" value="Pep_trsgly"/>
</dbReference>
<dbReference type="NCBIfam" id="TIGR02070">
    <property type="entry name" value="mono_pep_trsgly"/>
    <property type="match status" value="1"/>
</dbReference>
<dbReference type="PANTHER" id="PTHR30400:SF0">
    <property type="entry name" value="BIOSYNTHETIC PEPTIDOGLYCAN TRANSGLYCOSYLASE"/>
    <property type="match status" value="1"/>
</dbReference>
<dbReference type="PANTHER" id="PTHR30400">
    <property type="entry name" value="MONOFUNCTIONAL BIOSYNTHETIC PEPTIDOGLYCAN TRANSGLYCOSYLASE"/>
    <property type="match status" value="1"/>
</dbReference>
<dbReference type="Pfam" id="PF00912">
    <property type="entry name" value="Transgly"/>
    <property type="match status" value="1"/>
</dbReference>
<dbReference type="SUPFAM" id="SSF53955">
    <property type="entry name" value="Lysozyme-like"/>
    <property type="match status" value="1"/>
</dbReference>
<organism>
    <name type="scientific">Salmonella paratyphi C (strain RKS4594)</name>
    <dbReference type="NCBI Taxonomy" id="476213"/>
    <lineage>
        <taxon>Bacteria</taxon>
        <taxon>Pseudomonadati</taxon>
        <taxon>Pseudomonadota</taxon>
        <taxon>Gammaproteobacteria</taxon>
        <taxon>Enterobacterales</taxon>
        <taxon>Enterobacteriaceae</taxon>
        <taxon>Salmonella</taxon>
    </lineage>
</organism>
<proteinExistence type="inferred from homology"/>
<protein>
    <recommendedName>
        <fullName evidence="1">Biosynthetic peptidoglycan transglycosylase</fullName>
        <ecNumber evidence="1">2.4.99.28</ecNumber>
    </recommendedName>
    <alternativeName>
        <fullName evidence="1">Glycan polymerase</fullName>
    </alternativeName>
    <alternativeName>
        <fullName evidence="1">Peptidoglycan glycosyltransferase MtgA</fullName>
        <shortName evidence="1">PGT</shortName>
    </alternativeName>
</protein>
<reference key="1">
    <citation type="journal article" date="2009" name="PLoS ONE">
        <title>Salmonella paratyphi C: genetic divergence from Salmonella choleraesuis and pathogenic convergence with Salmonella typhi.</title>
        <authorList>
            <person name="Liu W.-Q."/>
            <person name="Feng Y."/>
            <person name="Wang Y."/>
            <person name="Zou Q.-H."/>
            <person name="Chen F."/>
            <person name="Guo J.-T."/>
            <person name="Peng Y.-H."/>
            <person name="Jin Y."/>
            <person name="Li Y.-G."/>
            <person name="Hu S.-N."/>
            <person name="Johnston R.N."/>
            <person name="Liu G.-R."/>
            <person name="Liu S.-L."/>
        </authorList>
    </citation>
    <scope>NUCLEOTIDE SEQUENCE [LARGE SCALE GENOMIC DNA]</scope>
    <source>
        <strain>RKS4594</strain>
    </source>
</reference>
<keyword id="KW-0997">Cell inner membrane</keyword>
<keyword id="KW-1003">Cell membrane</keyword>
<keyword id="KW-0133">Cell shape</keyword>
<keyword id="KW-0961">Cell wall biogenesis/degradation</keyword>
<keyword id="KW-0328">Glycosyltransferase</keyword>
<keyword id="KW-0472">Membrane</keyword>
<keyword id="KW-0573">Peptidoglycan synthesis</keyword>
<keyword id="KW-0808">Transferase</keyword>
<keyword id="KW-0812">Transmembrane</keyword>
<keyword id="KW-1133">Transmembrane helix</keyword>
<accession>C0PZM1</accession>
<name>MTGA_SALPC</name>
<feature type="chain" id="PRO_1000148437" description="Biosynthetic peptidoglycan transglycosylase">
    <location>
        <begin position="1"/>
        <end position="242"/>
    </location>
</feature>
<feature type="transmembrane region" description="Helical" evidence="1">
    <location>
        <begin position="19"/>
        <end position="39"/>
    </location>
</feature>
<sequence>MSKRRIAPLTFLRRLLLRILAALAVFWGGGIALFSVVPVPFSAVMAERQISAWLGGEFGYVAHSDWVSMADISPWMGLAVIAAEDQKFPEHWGFDVPAIEKALAHNERNESRIRGASTLSQQTAKNLFLWDGRSWLRKGLEAGLTLGIETVWSKKRILTVYLNIAEFGDGIFGVEAAAQRYFHKPASRLSVSEAALLAAVLPNPLRYKANAPSGYVRSRQAWIMRQMRQLGGESFMTRNQLN</sequence>